<name>Y2550_NITMU</name>
<sequence length="283" mass="32013">MQQFPRLARVGLGFRRELIPALKSGVPATIDFFEIAPENWIDLGGGAARDLLFFTERYPFVCHGLSLSIGGPAPLDEILLQKIRQFLDQHRVLLYTEHLSYCSDDGHLYDLLPIPFTEEAVKYVAERVRRTQDILERRIALENASFYVASPISDMSELDFIRAVLLEADCDLHLDVNNVYVNSINHDYDPVDFIRALPSDRIVYMHMAGHHKEAENLIIDTHGADVIDPVWSLLDQTYGMHGVAPTLLERDFNIPPLEQLMREVLHIALIQAQHADSGDASAT</sequence>
<dbReference type="EMBL" id="CP000103">
    <property type="protein sequence ID" value="ABB75839.1"/>
    <property type="molecule type" value="Genomic_DNA"/>
</dbReference>
<dbReference type="RefSeq" id="WP_011381838.1">
    <property type="nucleotide sequence ID" value="NC_007614.1"/>
</dbReference>
<dbReference type="SMR" id="Q2Y5Y2"/>
<dbReference type="STRING" id="323848.Nmul_A2550"/>
<dbReference type="KEGG" id="nmu:Nmul_A2550"/>
<dbReference type="eggNOG" id="COG3220">
    <property type="taxonomic scope" value="Bacteria"/>
</dbReference>
<dbReference type="HOGENOM" id="CLU_064263_0_0_4"/>
<dbReference type="OrthoDB" id="9763101at2"/>
<dbReference type="Proteomes" id="UP000002718">
    <property type="component" value="Chromosome"/>
</dbReference>
<dbReference type="Gene3D" id="3.20.20.150">
    <property type="entry name" value="Divalent-metal-dependent TIM barrel enzymes"/>
    <property type="match status" value="1"/>
</dbReference>
<dbReference type="HAMAP" id="MF_00697">
    <property type="entry name" value="UPF0276"/>
    <property type="match status" value="1"/>
</dbReference>
<dbReference type="InterPro" id="IPR007801">
    <property type="entry name" value="MbnB/TglH/ChrH"/>
</dbReference>
<dbReference type="InterPro" id="IPR036237">
    <property type="entry name" value="Xyl_isomerase-like_sf"/>
</dbReference>
<dbReference type="NCBIfam" id="NF003818">
    <property type="entry name" value="PRK05409.1"/>
    <property type="match status" value="1"/>
</dbReference>
<dbReference type="PANTHER" id="PTHR42194">
    <property type="entry name" value="UPF0276 PROTEIN HI_1600"/>
    <property type="match status" value="1"/>
</dbReference>
<dbReference type="PANTHER" id="PTHR42194:SF1">
    <property type="entry name" value="UPF0276 PROTEIN HI_1600"/>
    <property type="match status" value="1"/>
</dbReference>
<dbReference type="Pfam" id="PF05114">
    <property type="entry name" value="MbnB_TglH_ChrH"/>
    <property type="match status" value="1"/>
</dbReference>
<dbReference type="SUPFAM" id="SSF51658">
    <property type="entry name" value="Xylose isomerase-like"/>
    <property type="match status" value="1"/>
</dbReference>
<gene>
    <name type="ordered locus">Nmul_A2550</name>
</gene>
<organism>
    <name type="scientific">Nitrosospira multiformis (strain ATCC 25196 / NCIMB 11849 / C 71)</name>
    <dbReference type="NCBI Taxonomy" id="323848"/>
    <lineage>
        <taxon>Bacteria</taxon>
        <taxon>Pseudomonadati</taxon>
        <taxon>Pseudomonadota</taxon>
        <taxon>Betaproteobacteria</taxon>
        <taxon>Nitrosomonadales</taxon>
        <taxon>Nitrosomonadaceae</taxon>
        <taxon>Nitrosospira</taxon>
    </lineage>
</organism>
<feature type="chain" id="PRO_1000045472" description="UPF0276 protein Nmul_A2550">
    <location>
        <begin position="1"/>
        <end position="283"/>
    </location>
</feature>
<keyword id="KW-1185">Reference proteome</keyword>
<accession>Q2Y5Y2</accession>
<comment type="similarity">
    <text evidence="1">Belongs to the UPF0276 family.</text>
</comment>
<protein>
    <recommendedName>
        <fullName evidence="1">UPF0276 protein Nmul_A2550</fullName>
    </recommendedName>
</protein>
<proteinExistence type="inferred from homology"/>
<evidence type="ECO:0000255" key="1">
    <source>
        <dbReference type="HAMAP-Rule" id="MF_00697"/>
    </source>
</evidence>
<reference key="1">
    <citation type="submission" date="2005-08" db="EMBL/GenBank/DDBJ databases">
        <title>Complete sequence of chromosome 1 of Nitrosospira multiformis ATCC 25196.</title>
        <authorList>
            <person name="Copeland A."/>
            <person name="Lucas S."/>
            <person name="Lapidus A."/>
            <person name="Barry K."/>
            <person name="Detter J.C."/>
            <person name="Glavina T."/>
            <person name="Hammon N."/>
            <person name="Israni S."/>
            <person name="Pitluck S."/>
            <person name="Chain P."/>
            <person name="Malfatti S."/>
            <person name="Shin M."/>
            <person name="Vergez L."/>
            <person name="Schmutz J."/>
            <person name="Larimer F."/>
            <person name="Land M."/>
            <person name="Hauser L."/>
            <person name="Kyrpides N."/>
            <person name="Lykidis A."/>
            <person name="Richardson P."/>
        </authorList>
    </citation>
    <scope>NUCLEOTIDE SEQUENCE [LARGE SCALE GENOMIC DNA]</scope>
    <source>
        <strain>ATCC 25196 / NCIMB 11849 / C 71</strain>
    </source>
</reference>